<proteinExistence type="evidence at transcript level"/>
<name>CECE1_CANTT</name>
<accession>C5M337</accession>
<organism evidence="8">
    <name type="scientific">Candida tropicalis (strain ATCC MYA-3404 / T1)</name>
    <name type="common">Yeast</name>
    <dbReference type="NCBI Taxonomy" id="294747"/>
    <lineage>
        <taxon>Eukaryota</taxon>
        <taxon>Fungi</taxon>
        <taxon>Dikarya</taxon>
        <taxon>Ascomycota</taxon>
        <taxon>Saccharomycotina</taxon>
        <taxon>Pichiomycetes</taxon>
        <taxon>Debaryomycetaceae</taxon>
        <taxon>Candida/Lodderomyces clade</taxon>
        <taxon>Candida</taxon>
    </lineage>
</organism>
<comment type="function">
    <text evidence="1">Secreted protein cleaved by KEX2 in 8 similar peptides (ECE1-I to ECE1-VIII). Stimulates biofilm formation.</text>
</comment>
<comment type="function">
    <molecule>Candidalysin ECE1-III</molecule>
    <text evidence="3">Acts as a cytolytic peptide toxin that directly damages host epithelial membranes, triggers a danger response signaling pathway and activates epithelial immunity (PubMed:35073742). Probably acts similarly to cationic antimicrobial peptide toxins, inducing lesions after binding to target cell membranes and causing an inward current associated with calcium influx (PubMed:35073742).</text>
</comment>
<comment type="subcellular location">
    <subcellularLocation>
        <location evidence="1">Secreted</location>
    </subcellularLocation>
</comment>
<comment type="subcellular location">
    <molecule>Candidalysin ECE1-III</molecule>
    <subcellularLocation>
        <location evidence="6">Host cell membrane</location>
        <topology evidence="2">Single-pass membrane protein</topology>
    </subcellularLocation>
</comment>
<comment type="induction">
    <text evidence="3">Expression is not markedly induced by human epithelial cells.</text>
</comment>
<comment type="domain">
    <text evidence="6">The N-terminal alpha-helix of peptide ECE1-III allows insertion of the toxin into host epithelial cells membranes.</text>
</comment>
<feature type="signal peptide" evidence="2">
    <location>
        <begin position="1"/>
        <end position="18"/>
    </location>
</feature>
<feature type="chain" id="PRO_5002954939" description="Extent of cell elongation protein 1" evidence="2">
    <location>
        <begin position="19"/>
        <end position="282"/>
    </location>
</feature>
<feature type="chain" id="PRO_0000456774" description="Candidalysin ECE1-III" evidence="6">
    <location>
        <begin position="68"/>
        <end position="99"/>
    </location>
</feature>
<feature type="transmembrane region" description="Helical" evidence="2">
    <location>
        <begin position="68"/>
        <end position="92"/>
    </location>
</feature>
<evidence type="ECO:0000250" key="1">
    <source>
        <dbReference type="UniProtKB" id="Q07730"/>
    </source>
</evidence>
<evidence type="ECO:0000255" key="2"/>
<evidence type="ECO:0000269" key="3">
    <source>
    </source>
</evidence>
<evidence type="ECO:0000303" key="4">
    <source>
    </source>
</evidence>
<evidence type="ECO:0000305" key="5"/>
<evidence type="ECO:0000305" key="6">
    <source>
    </source>
</evidence>
<evidence type="ECO:0000312" key="7">
    <source>
        <dbReference type="EMBL" id="EER35737.1"/>
    </source>
</evidence>
<evidence type="ECO:0000312" key="8">
    <source>
        <dbReference type="Proteomes" id="UP000002037"/>
    </source>
</evidence>
<protein>
    <recommendedName>
        <fullName evidence="5">Extent of cell elongation protein 1</fullName>
    </recommendedName>
    <component>
        <recommendedName>
            <fullName evidence="4">Candidalysin ECE1-III</fullName>
        </recommendedName>
    </component>
</protein>
<sequence>MKFSKVASFAFLALSSQAALIQHDVIIENIKRDAVLAGSAENNIASSAFTKRESEVDSSEDVQLEKRISFAGIVSSIINQLPSIIQIIGNIIKAGLVKRDDIDDAFALVLAEYPHIVSVFEDAFGDFTEAKRDEAASVGTQILGSFPSILTQVVNGFSKVLDFANSDTFSTGLSILSNFTSIASSFASSLSSVVQNGKRDGVEDIVSMVVRQIPDLIVEASTPFVTNAEKMKRDADVAASLVDNLVKKGLSTAIDTFGAATVASVVSKRQVSSFLSKVLSKA</sequence>
<gene>
    <name evidence="4" type="primary">ECE1</name>
    <name evidence="7" type="ORF">CTRG_00476</name>
</gene>
<keyword id="KW-0165">Cleavage on pair of basic residues</keyword>
<keyword id="KW-1032">Host cell membrane</keyword>
<keyword id="KW-1043">Host membrane</keyword>
<keyword id="KW-0472">Membrane</keyword>
<keyword id="KW-1185">Reference proteome</keyword>
<keyword id="KW-0964">Secreted</keyword>
<keyword id="KW-0732">Signal</keyword>
<keyword id="KW-0800">Toxin</keyword>
<keyword id="KW-0812">Transmembrane</keyword>
<keyword id="KW-1133">Transmembrane helix</keyword>
<reference evidence="8" key="1">
    <citation type="journal article" date="2009" name="Nature">
        <title>Evolution of pathogenicity and sexual reproduction in eight Candida genomes.</title>
        <authorList>
            <person name="Butler G."/>
            <person name="Rasmussen M.D."/>
            <person name="Lin M.F."/>
            <person name="Santos M.A.S."/>
            <person name="Sakthikumar S."/>
            <person name="Munro C.A."/>
            <person name="Rheinbay E."/>
            <person name="Grabherr M."/>
            <person name="Forche A."/>
            <person name="Reedy J.L."/>
            <person name="Agrafioti I."/>
            <person name="Arnaud M.B."/>
            <person name="Bates S."/>
            <person name="Brown A.J.P."/>
            <person name="Brunke S."/>
            <person name="Costanzo M.C."/>
            <person name="Fitzpatrick D.A."/>
            <person name="de Groot P.W.J."/>
            <person name="Harris D."/>
            <person name="Hoyer L.L."/>
            <person name="Hube B."/>
            <person name="Klis F.M."/>
            <person name="Kodira C."/>
            <person name="Lennard N."/>
            <person name="Logue M.E."/>
            <person name="Martin R."/>
            <person name="Neiman A.M."/>
            <person name="Nikolaou E."/>
            <person name="Quail M.A."/>
            <person name="Quinn J."/>
            <person name="Santos M.C."/>
            <person name="Schmitzberger F.F."/>
            <person name="Sherlock G."/>
            <person name="Shah P."/>
            <person name="Silverstein K.A.T."/>
            <person name="Skrzypek M.S."/>
            <person name="Soll D."/>
            <person name="Staggs R."/>
            <person name="Stansfield I."/>
            <person name="Stumpf M.P.H."/>
            <person name="Sudbery P.E."/>
            <person name="Srikantha T."/>
            <person name="Zeng Q."/>
            <person name="Berman J."/>
            <person name="Berriman M."/>
            <person name="Heitman J."/>
            <person name="Gow N.A.R."/>
            <person name="Lorenz M.C."/>
            <person name="Birren B.W."/>
            <person name="Kellis M."/>
            <person name="Cuomo C.A."/>
        </authorList>
    </citation>
    <scope>NUCLEOTIDE SEQUENCE [LARGE SCALE GENOMIC DNA]</scope>
    <source>
        <strain>ATCC MYA-3404 / T1</strain>
    </source>
</reference>
<reference evidence="5" key="2">
    <citation type="journal article" date="2022" name="MBio">
        <title>Candidalysins are a new family of cytolytic fungal peptide toxins.</title>
        <authorList>
            <person name="Richardson J.P."/>
            <person name="Brown R."/>
            <person name="Kichik N."/>
            <person name="Lee S."/>
            <person name="Priest E."/>
            <person name="Mogavero S."/>
            <person name="Maufrais C."/>
            <person name="Wickramasinghe D.N."/>
            <person name="Tsavou A."/>
            <person name="Kotowicz N.K."/>
            <person name="Hepworth O.W."/>
            <person name="Gallego-Cortes A."/>
            <person name="Ponde N.O."/>
            <person name="Ho J."/>
            <person name="Moyes D.L."/>
            <person name="Wilson D."/>
            <person name="D'Enfert C."/>
            <person name="Hube B."/>
            <person name="Naglik J.R."/>
        </authorList>
    </citation>
    <scope>FUNCTION (CANDIDALYSIN ECE1-III)</scope>
    <scope>SUBCELLULAR LOCATION (CANDIDALYSIN ECE1-III)</scope>
    <scope>INDUCTION</scope>
</reference>
<dbReference type="EMBL" id="GG692395">
    <property type="protein sequence ID" value="EER35737.1"/>
    <property type="molecule type" value="Genomic_DNA"/>
</dbReference>
<dbReference type="RefSeq" id="XP_002545695.1">
    <property type="nucleotide sequence ID" value="XM_002545649.1"/>
</dbReference>
<dbReference type="STRING" id="294747.C5M337"/>
<dbReference type="EnsemblFungi" id="CTRG_00476-t43_1">
    <property type="protein sequence ID" value="CTRG_00476-t43_1-p1"/>
    <property type="gene ID" value="CTRG_00476"/>
</dbReference>
<dbReference type="GeneID" id="8296224"/>
<dbReference type="KEGG" id="ctp:CTRG_00476"/>
<dbReference type="VEuPathDB" id="FungiDB:CTRG_00476"/>
<dbReference type="HOGENOM" id="CLU_986947_0_0_1"/>
<dbReference type="OrthoDB" id="4024249at2759"/>
<dbReference type="Proteomes" id="UP000002037">
    <property type="component" value="Unassembled WGS sequence"/>
</dbReference>
<dbReference type="GO" id="GO:0005576">
    <property type="term" value="C:extracellular region"/>
    <property type="evidence" value="ECO:0007669"/>
    <property type="project" value="UniProtKB-SubCell"/>
</dbReference>
<dbReference type="GO" id="GO:0020002">
    <property type="term" value="C:host cell plasma membrane"/>
    <property type="evidence" value="ECO:0000314"/>
    <property type="project" value="UniProtKB"/>
</dbReference>
<dbReference type="GO" id="GO:0016020">
    <property type="term" value="C:membrane"/>
    <property type="evidence" value="ECO:0007669"/>
    <property type="project" value="UniProtKB-KW"/>
</dbReference>
<dbReference type="GO" id="GO:0090729">
    <property type="term" value="F:toxin activity"/>
    <property type="evidence" value="ECO:0007669"/>
    <property type="project" value="UniProtKB-KW"/>
</dbReference>
<dbReference type="GO" id="GO:0001897">
    <property type="term" value="P:symbiont-mediated cytolysis of host cell"/>
    <property type="evidence" value="ECO:0000314"/>
    <property type="project" value="UniProtKB"/>
</dbReference>